<feature type="chain" id="PRO_1000004162" description="Large ribosomal subunit protein bL33">
    <location>
        <begin position="1"/>
        <end position="55"/>
    </location>
</feature>
<feature type="region of interest" description="Disordered" evidence="2">
    <location>
        <begin position="1"/>
        <end position="27"/>
    </location>
</feature>
<feature type="compositionally biased region" description="Basic and acidic residues" evidence="2">
    <location>
        <begin position="1"/>
        <end position="11"/>
    </location>
</feature>
<feature type="compositionally biased region" description="Polar residues" evidence="2">
    <location>
        <begin position="14"/>
        <end position="24"/>
    </location>
</feature>
<sequence>MAKGGREKIKLESTAGTGHFYTTSKNKRTTPEKLEFMKYDPKARKHVAYKEVKLK</sequence>
<evidence type="ECO:0000255" key="1">
    <source>
        <dbReference type="HAMAP-Rule" id="MF_00294"/>
    </source>
</evidence>
<evidence type="ECO:0000256" key="2">
    <source>
        <dbReference type="SAM" id="MobiDB-lite"/>
    </source>
</evidence>
<evidence type="ECO:0000305" key="3"/>
<comment type="similarity">
    <text evidence="1">Belongs to the bacterial ribosomal protein bL33 family.</text>
</comment>
<proteinExistence type="inferred from homology"/>
<protein>
    <recommendedName>
        <fullName evidence="1">Large ribosomal subunit protein bL33</fullName>
    </recommendedName>
    <alternativeName>
        <fullName evidence="3">50S ribosomal protein L33</fullName>
    </alternativeName>
</protein>
<dbReference type="EMBL" id="CP000089">
    <property type="protein sequence ID" value="AAZ47874.1"/>
    <property type="molecule type" value="Genomic_DNA"/>
</dbReference>
<dbReference type="SMR" id="Q47BA7"/>
<dbReference type="STRING" id="159087.Daro_3144"/>
<dbReference type="KEGG" id="dar:Daro_3144"/>
<dbReference type="eggNOG" id="COG0267">
    <property type="taxonomic scope" value="Bacteria"/>
</dbReference>
<dbReference type="HOGENOM" id="CLU_190949_1_1_4"/>
<dbReference type="OrthoDB" id="21586at2"/>
<dbReference type="GO" id="GO:0022625">
    <property type="term" value="C:cytosolic large ribosomal subunit"/>
    <property type="evidence" value="ECO:0007669"/>
    <property type="project" value="TreeGrafter"/>
</dbReference>
<dbReference type="GO" id="GO:0003735">
    <property type="term" value="F:structural constituent of ribosome"/>
    <property type="evidence" value="ECO:0007669"/>
    <property type="project" value="InterPro"/>
</dbReference>
<dbReference type="GO" id="GO:0006412">
    <property type="term" value="P:translation"/>
    <property type="evidence" value="ECO:0007669"/>
    <property type="project" value="UniProtKB-UniRule"/>
</dbReference>
<dbReference type="Gene3D" id="2.20.28.120">
    <property type="entry name" value="Ribosomal protein L33"/>
    <property type="match status" value="1"/>
</dbReference>
<dbReference type="HAMAP" id="MF_00294">
    <property type="entry name" value="Ribosomal_bL33"/>
    <property type="match status" value="1"/>
</dbReference>
<dbReference type="InterPro" id="IPR001705">
    <property type="entry name" value="Ribosomal_bL33"/>
</dbReference>
<dbReference type="InterPro" id="IPR018264">
    <property type="entry name" value="Ribosomal_bL33_CS"/>
</dbReference>
<dbReference type="InterPro" id="IPR038584">
    <property type="entry name" value="Ribosomal_bL33_sf"/>
</dbReference>
<dbReference type="InterPro" id="IPR011332">
    <property type="entry name" value="Ribosomal_zn-bd"/>
</dbReference>
<dbReference type="NCBIfam" id="NF001860">
    <property type="entry name" value="PRK00595.1"/>
    <property type="match status" value="1"/>
</dbReference>
<dbReference type="NCBIfam" id="TIGR01023">
    <property type="entry name" value="rpmG_bact"/>
    <property type="match status" value="1"/>
</dbReference>
<dbReference type="PANTHER" id="PTHR15238">
    <property type="entry name" value="54S RIBOSOMAL PROTEIN L39, MITOCHONDRIAL"/>
    <property type="match status" value="1"/>
</dbReference>
<dbReference type="PANTHER" id="PTHR15238:SF1">
    <property type="entry name" value="LARGE RIBOSOMAL SUBUNIT PROTEIN BL33M"/>
    <property type="match status" value="1"/>
</dbReference>
<dbReference type="Pfam" id="PF00471">
    <property type="entry name" value="Ribosomal_L33"/>
    <property type="match status" value="1"/>
</dbReference>
<dbReference type="SUPFAM" id="SSF57829">
    <property type="entry name" value="Zn-binding ribosomal proteins"/>
    <property type="match status" value="1"/>
</dbReference>
<dbReference type="PROSITE" id="PS00582">
    <property type="entry name" value="RIBOSOMAL_L33"/>
    <property type="match status" value="1"/>
</dbReference>
<accession>Q47BA7</accession>
<reference key="1">
    <citation type="journal article" date="2009" name="BMC Genomics">
        <title>Metabolic analysis of the soil microbe Dechloromonas aromatica str. RCB: indications of a surprisingly complex life-style and cryptic anaerobic pathways for aromatic degradation.</title>
        <authorList>
            <person name="Salinero K.K."/>
            <person name="Keller K."/>
            <person name="Feil W.S."/>
            <person name="Feil H."/>
            <person name="Trong S."/>
            <person name="Di Bartolo G."/>
            <person name="Lapidus A."/>
        </authorList>
    </citation>
    <scope>NUCLEOTIDE SEQUENCE [LARGE SCALE GENOMIC DNA]</scope>
    <source>
        <strain>RCB</strain>
    </source>
</reference>
<organism>
    <name type="scientific">Dechloromonas aromatica (strain RCB)</name>
    <dbReference type="NCBI Taxonomy" id="159087"/>
    <lineage>
        <taxon>Bacteria</taxon>
        <taxon>Pseudomonadati</taxon>
        <taxon>Pseudomonadota</taxon>
        <taxon>Betaproteobacteria</taxon>
        <taxon>Rhodocyclales</taxon>
        <taxon>Azonexaceae</taxon>
        <taxon>Dechloromonas</taxon>
    </lineage>
</organism>
<gene>
    <name evidence="1" type="primary">rpmG</name>
    <name type="ordered locus">Daro_3144</name>
</gene>
<keyword id="KW-0687">Ribonucleoprotein</keyword>
<keyword id="KW-0689">Ribosomal protein</keyword>
<name>RL33_DECAR</name>